<sequence length="180" mass="20374">MKEKAVVLDDQMIRRALTRISHEIVEHNKGVDQCVLVGIKTRGIFLAKRLAEKIGQIEGKEIEVGELDITLYRDDLTLQSKDKEPLVKGSDIPVDITKKKVILVDDVLYTGRTVRAAMDALMDLGRPSQIQLAVLVDRGHRELPIRADYVGKNIPTSSEERIEVDLQETDQKDRVSIYEK</sequence>
<dbReference type="EC" id="2.4.2.9" evidence="1"/>
<dbReference type="EMBL" id="CP000764">
    <property type="protein sequence ID" value="ABS22774.1"/>
    <property type="molecule type" value="Genomic_DNA"/>
</dbReference>
<dbReference type="RefSeq" id="WP_012094981.1">
    <property type="nucleotide sequence ID" value="NC_009674.1"/>
</dbReference>
<dbReference type="SMR" id="A7GRL6"/>
<dbReference type="STRING" id="315749.Bcer98_2540"/>
<dbReference type="GeneID" id="33897794"/>
<dbReference type="KEGG" id="bcy:Bcer98_2540"/>
<dbReference type="eggNOG" id="COG2065">
    <property type="taxonomic scope" value="Bacteria"/>
</dbReference>
<dbReference type="HOGENOM" id="CLU_094234_2_1_9"/>
<dbReference type="OrthoDB" id="9802227at2"/>
<dbReference type="Proteomes" id="UP000002300">
    <property type="component" value="Chromosome"/>
</dbReference>
<dbReference type="GO" id="GO:0003723">
    <property type="term" value="F:RNA binding"/>
    <property type="evidence" value="ECO:0007669"/>
    <property type="project" value="UniProtKB-UniRule"/>
</dbReference>
<dbReference type="GO" id="GO:0004845">
    <property type="term" value="F:uracil phosphoribosyltransferase activity"/>
    <property type="evidence" value="ECO:0007669"/>
    <property type="project" value="UniProtKB-UniRule"/>
</dbReference>
<dbReference type="GO" id="GO:0006353">
    <property type="term" value="P:DNA-templated transcription termination"/>
    <property type="evidence" value="ECO:0007669"/>
    <property type="project" value="UniProtKB-UniRule"/>
</dbReference>
<dbReference type="CDD" id="cd06223">
    <property type="entry name" value="PRTases_typeI"/>
    <property type="match status" value="1"/>
</dbReference>
<dbReference type="FunFam" id="3.40.50.2020:FF:000020">
    <property type="entry name" value="Bifunctional protein PyrR"/>
    <property type="match status" value="1"/>
</dbReference>
<dbReference type="Gene3D" id="3.40.50.2020">
    <property type="match status" value="1"/>
</dbReference>
<dbReference type="HAMAP" id="MF_01219">
    <property type="entry name" value="PyrR"/>
    <property type="match status" value="1"/>
</dbReference>
<dbReference type="InterPro" id="IPR000836">
    <property type="entry name" value="PRibTrfase_dom"/>
</dbReference>
<dbReference type="InterPro" id="IPR029057">
    <property type="entry name" value="PRTase-like"/>
</dbReference>
<dbReference type="InterPro" id="IPR023050">
    <property type="entry name" value="PyrR"/>
</dbReference>
<dbReference type="InterPro" id="IPR050137">
    <property type="entry name" value="PyrR_bifunctional"/>
</dbReference>
<dbReference type="NCBIfam" id="NF003545">
    <property type="entry name" value="PRK05205.1-1"/>
    <property type="match status" value="1"/>
</dbReference>
<dbReference type="NCBIfam" id="NF003547">
    <property type="entry name" value="PRK05205.1-3"/>
    <property type="match status" value="1"/>
</dbReference>
<dbReference type="NCBIfam" id="NF003548">
    <property type="entry name" value="PRK05205.1-4"/>
    <property type="match status" value="1"/>
</dbReference>
<dbReference type="NCBIfam" id="NF003549">
    <property type="entry name" value="PRK05205.1-5"/>
    <property type="match status" value="1"/>
</dbReference>
<dbReference type="PANTHER" id="PTHR11608">
    <property type="entry name" value="BIFUNCTIONAL PROTEIN PYRR"/>
    <property type="match status" value="1"/>
</dbReference>
<dbReference type="PANTHER" id="PTHR11608:SF0">
    <property type="entry name" value="BIFUNCTIONAL PROTEIN PYRR"/>
    <property type="match status" value="1"/>
</dbReference>
<dbReference type="Pfam" id="PF00156">
    <property type="entry name" value="Pribosyltran"/>
    <property type="match status" value="1"/>
</dbReference>
<dbReference type="SUPFAM" id="SSF53271">
    <property type="entry name" value="PRTase-like"/>
    <property type="match status" value="1"/>
</dbReference>
<keyword id="KW-0328">Glycosyltransferase</keyword>
<keyword id="KW-0694">RNA-binding</keyword>
<keyword id="KW-0804">Transcription</keyword>
<keyword id="KW-0805">Transcription regulation</keyword>
<keyword id="KW-0806">Transcription termination</keyword>
<keyword id="KW-0808">Transferase</keyword>
<evidence type="ECO:0000255" key="1">
    <source>
        <dbReference type="HAMAP-Rule" id="MF_01219"/>
    </source>
</evidence>
<proteinExistence type="inferred from homology"/>
<accession>A7GRL6</accession>
<feature type="chain" id="PRO_1000085647" description="Bifunctional protein PyrR">
    <location>
        <begin position="1"/>
        <end position="180"/>
    </location>
</feature>
<feature type="short sequence motif" description="PRPP-binding" evidence="1">
    <location>
        <begin position="101"/>
        <end position="113"/>
    </location>
</feature>
<reference key="1">
    <citation type="journal article" date="2008" name="Chem. Biol. Interact.">
        <title>Extending the Bacillus cereus group genomics to putative food-borne pathogens of different toxicity.</title>
        <authorList>
            <person name="Lapidus A."/>
            <person name="Goltsman E."/>
            <person name="Auger S."/>
            <person name="Galleron N."/>
            <person name="Segurens B."/>
            <person name="Dossat C."/>
            <person name="Land M.L."/>
            <person name="Broussolle V."/>
            <person name="Brillard J."/>
            <person name="Guinebretiere M.-H."/>
            <person name="Sanchis V."/>
            <person name="Nguen-the C."/>
            <person name="Lereclus D."/>
            <person name="Richardson P."/>
            <person name="Wincker P."/>
            <person name="Weissenbach J."/>
            <person name="Ehrlich S.D."/>
            <person name="Sorokin A."/>
        </authorList>
    </citation>
    <scope>NUCLEOTIDE SEQUENCE [LARGE SCALE GENOMIC DNA]</scope>
    <source>
        <strain>DSM 22905 / CIP 110041 / 391-98 / NVH 391-98</strain>
    </source>
</reference>
<gene>
    <name evidence="1" type="primary">pyrR</name>
    <name type="ordered locus">Bcer98_2540</name>
</gene>
<name>PYRR_BACCN</name>
<organism>
    <name type="scientific">Bacillus cytotoxicus (strain DSM 22905 / CIP 110041 / 391-98 / NVH 391-98)</name>
    <dbReference type="NCBI Taxonomy" id="315749"/>
    <lineage>
        <taxon>Bacteria</taxon>
        <taxon>Bacillati</taxon>
        <taxon>Bacillota</taxon>
        <taxon>Bacilli</taxon>
        <taxon>Bacillales</taxon>
        <taxon>Bacillaceae</taxon>
        <taxon>Bacillus</taxon>
        <taxon>Bacillus cereus group</taxon>
    </lineage>
</organism>
<comment type="function">
    <text evidence="1">Regulates transcriptional attenuation of the pyrimidine nucleotide (pyr) operon by binding in a uridine-dependent manner to specific sites on pyr mRNA. This disrupts an antiterminator hairpin in the RNA and favors formation of a downstream transcription terminator, leading to a reduced expression of downstream genes.</text>
</comment>
<comment type="function">
    <text evidence="1">Also displays a weak uracil phosphoribosyltransferase activity which is not physiologically significant.</text>
</comment>
<comment type="catalytic activity">
    <reaction evidence="1">
        <text>UMP + diphosphate = 5-phospho-alpha-D-ribose 1-diphosphate + uracil</text>
        <dbReference type="Rhea" id="RHEA:13017"/>
        <dbReference type="ChEBI" id="CHEBI:17568"/>
        <dbReference type="ChEBI" id="CHEBI:33019"/>
        <dbReference type="ChEBI" id="CHEBI:57865"/>
        <dbReference type="ChEBI" id="CHEBI:58017"/>
        <dbReference type="EC" id="2.4.2.9"/>
    </reaction>
</comment>
<comment type="subunit">
    <text evidence="1">Homodimer and homohexamer; in equilibrium.</text>
</comment>
<comment type="similarity">
    <text evidence="1">Belongs to the purine/pyrimidine phosphoribosyltransferase family. PyrR subfamily.</text>
</comment>
<protein>
    <recommendedName>
        <fullName evidence="1">Bifunctional protein PyrR</fullName>
    </recommendedName>
    <domain>
        <recommendedName>
            <fullName evidence="1">Pyrimidine operon regulatory protein</fullName>
        </recommendedName>
    </domain>
    <domain>
        <recommendedName>
            <fullName evidence="1">Uracil phosphoribosyltransferase</fullName>
            <shortName evidence="1">UPRTase</shortName>
            <ecNumber evidence="1">2.4.2.9</ecNumber>
        </recommendedName>
    </domain>
</protein>